<keyword id="KW-0067">ATP-binding</keyword>
<keyword id="KW-0460">Magnesium</keyword>
<keyword id="KW-0547">Nucleotide-binding</keyword>
<keyword id="KW-0808">Transferase</keyword>
<keyword id="KW-0819">tRNA processing</keyword>
<proteinExistence type="inferred from homology"/>
<evidence type="ECO:0000255" key="1">
    <source>
        <dbReference type="HAMAP-Rule" id="MF_00185"/>
    </source>
</evidence>
<evidence type="ECO:0000305" key="2"/>
<reference key="1">
    <citation type="journal article" date="2004" name="Nat. Biotechnol.">
        <title>Complete sequence and comparative genome analysis of the dairy bacterium Streptococcus thermophilus.</title>
        <authorList>
            <person name="Bolotin A."/>
            <person name="Quinquis B."/>
            <person name="Renault P."/>
            <person name="Sorokin A."/>
            <person name="Ehrlich S.D."/>
            <person name="Kulakauskas S."/>
            <person name="Lapidus A."/>
            <person name="Goltsman E."/>
            <person name="Mazur M."/>
            <person name="Pusch G.D."/>
            <person name="Fonstein M."/>
            <person name="Overbeek R."/>
            <person name="Kyprides N."/>
            <person name="Purnelle B."/>
            <person name="Prozzi D."/>
            <person name="Ngui K."/>
            <person name="Masuy D."/>
            <person name="Hancy F."/>
            <person name="Burteau S."/>
            <person name="Boutry M."/>
            <person name="Delcour J."/>
            <person name="Goffeau A."/>
            <person name="Hols P."/>
        </authorList>
    </citation>
    <scope>NUCLEOTIDE SEQUENCE [LARGE SCALE GENOMIC DNA]</scope>
    <source>
        <strain>CNRZ 1066</strain>
    </source>
</reference>
<dbReference type="EC" id="2.5.1.75" evidence="1"/>
<dbReference type="EMBL" id="CP000024">
    <property type="protein sequence ID" value="AAV62723.1"/>
    <property type="status" value="ALT_INIT"/>
    <property type="molecule type" value="Genomic_DNA"/>
</dbReference>
<dbReference type="RefSeq" id="WP_041827150.1">
    <property type="nucleotide sequence ID" value="NC_006449.1"/>
</dbReference>
<dbReference type="SMR" id="Q5LZH6"/>
<dbReference type="KEGG" id="stc:str1177"/>
<dbReference type="HOGENOM" id="CLU_032616_0_1_9"/>
<dbReference type="GO" id="GO:0005524">
    <property type="term" value="F:ATP binding"/>
    <property type="evidence" value="ECO:0007669"/>
    <property type="project" value="UniProtKB-UniRule"/>
</dbReference>
<dbReference type="GO" id="GO:0052381">
    <property type="term" value="F:tRNA dimethylallyltransferase activity"/>
    <property type="evidence" value="ECO:0007669"/>
    <property type="project" value="UniProtKB-UniRule"/>
</dbReference>
<dbReference type="GO" id="GO:0006400">
    <property type="term" value="P:tRNA modification"/>
    <property type="evidence" value="ECO:0007669"/>
    <property type="project" value="TreeGrafter"/>
</dbReference>
<dbReference type="Gene3D" id="3.40.50.300">
    <property type="entry name" value="P-loop containing nucleotide triphosphate hydrolases"/>
    <property type="match status" value="1"/>
</dbReference>
<dbReference type="HAMAP" id="MF_00185">
    <property type="entry name" value="IPP_trans"/>
    <property type="match status" value="1"/>
</dbReference>
<dbReference type="InterPro" id="IPR039657">
    <property type="entry name" value="Dimethylallyltransferase"/>
</dbReference>
<dbReference type="InterPro" id="IPR018022">
    <property type="entry name" value="IPT"/>
</dbReference>
<dbReference type="InterPro" id="IPR027417">
    <property type="entry name" value="P-loop_NTPase"/>
</dbReference>
<dbReference type="NCBIfam" id="TIGR00174">
    <property type="entry name" value="miaA"/>
    <property type="match status" value="1"/>
</dbReference>
<dbReference type="PANTHER" id="PTHR11088">
    <property type="entry name" value="TRNA DIMETHYLALLYLTRANSFERASE"/>
    <property type="match status" value="1"/>
</dbReference>
<dbReference type="PANTHER" id="PTHR11088:SF60">
    <property type="entry name" value="TRNA DIMETHYLALLYLTRANSFERASE"/>
    <property type="match status" value="1"/>
</dbReference>
<dbReference type="Pfam" id="PF01715">
    <property type="entry name" value="IPPT"/>
    <property type="match status" value="1"/>
</dbReference>
<dbReference type="SUPFAM" id="SSF52540">
    <property type="entry name" value="P-loop containing nucleoside triphosphate hydrolases"/>
    <property type="match status" value="2"/>
</dbReference>
<feature type="chain" id="PRO_0000377338" description="tRNA dimethylallyltransferase">
    <location>
        <begin position="1"/>
        <end position="299"/>
    </location>
</feature>
<feature type="region of interest" description="Interaction with substrate tRNA" evidence="1">
    <location>
        <begin position="35"/>
        <end position="38"/>
    </location>
</feature>
<feature type="binding site" evidence="1">
    <location>
        <begin position="10"/>
        <end position="17"/>
    </location>
    <ligand>
        <name>ATP</name>
        <dbReference type="ChEBI" id="CHEBI:30616"/>
    </ligand>
</feature>
<feature type="binding site" evidence="1">
    <location>
        <begin position="12"/>
        <end position="17"/>
    </location>
    <ligand>
        <name>substrate</name>
    </ligand>
</feature>
<feature type="site" description="Interaction with substrate tRNA" evidence="1">
    <location>
        <position position="101"/>
    </location>
</feature>
<feature type="site" description="Interaction with substrate tRNA" evidence="1">
    <location>
        <position position="127"/>
    </location>
</feature>
<gene>
    <name evidence="1" type="primary">miaA</name>
    <name type="ordered locus">str1177</name>
</gene>
<organism>
    <name type="scientific">Streptococcus thermophilus (strain CNRZ 1066)</name>
    <dbReference type="NCBI Taxonomy" id="299768"/>
    <lineage>
        <taxon>Bacteria</taxon>
        <taxon>Bacillati</taxon>
        <taxon>Bacillota</taxon>
        <taxon>Bacilli</taxon>
        <taxon>Lactobacillales</taxon>
        <taxon>Streptococcaceae</taxon>
        <taxon>Streptococcus</taxon>
    </lineage>
</organism>
<sequence>MKTKLIVVAGPTAVGKTALGIELAERFNGEIISGDSQQVYRQLNIGTAKATPEEQAAAVHHLIDVRDVDESYSAYDFVTEAQAAITDIVSRGKLPIIVGGTGLYLQSLLEGYHLGGKVDQNQVLAYRSELEQLSDQQLFEKIDSSGIEIKEINRRRAIRALELYRFSDNLENTETCYEPFIIGLDDERSLIYDRINTRVDKMVELGLLEEAKWLYDNFPEAQSARGIGYKELFPYFSGEQTLDEALEKLKQNTRRFAKRQLTWFRNRMTVSFYQISSPEYPENVIQDLAIFLNEEEGEK</sequence>
<comment type="function">
    <text evidence="1">Catalyzes the transfer of a dimethylallyl group onto the adenine at position 37 in tRNAs that read codons beginning with uridine, leading to the formation of N6-(dimethylallyl)adenosine (i(6)A).</text>
</comment>
<comment type="catalytic activity">
    <reaction evidence="1">
        <text>adenosine(37) in tRNA + dimethylallyl diphosphate = N(6)-dimethylallyladenosine(37) in tRNA + diphosphate</text>
        <dbReference type="Rhea" id="RHEA:26482"/>
        <dbReference type="Rhea" id="RHEA-COMP:10162"/>
        <dbReference type="Rhea" id="RHEA-COMP:10375"/>
        <dbReference type="ChEBI" id="CHEBI:33019"/>
        <dbReference type="ChEBI" id="CHEBI:57623"/>
        <dbReference type="ChEBI" id="CHEBI:74411"/>
        <dbReference type="ChEBI" id="CHEBI:74415"/>
        <dbReference type="EC" id="2.5.1.75"/>
    </reaction>
</comment>
<comment type="cofactor">
    <cofactor evidence="1">
        <name>Mg(2+)</name>
        <dbReference type="ChEBI" id="CHEBI:18420"/>
    </cofactor>
</comment>
<comment type="subunit">
    <text evidence="1">Monomer.</text>
</comment>
<comment type="similarity">
    <text evidence="1">Belongs to the IPP transferase family.</text>
</comment>
<comment type="sequence caution" evidence="2">
    <conflict type="erroneous initiation">
        <sequence resource="EMBL-CDS" id="AAV62723"/>
    </conflict>
</comment>
<protein>
    <recommendedName>
        <fullName evidence="1">tRNA dimethylallyltransferase</fullName>
        <ecNumber evidence="1">2.5.1.75</ecNumber>
    </recommendedName>
    <alternativeName>
        <fullName evidence="1">Dimethylallyl diphosphate:tRNA dimethylallyltransferase</fullName>
        <shortName evidence="1">DMAPP:tRNA dimethylallyltransferase</shortName>
        <shortName evidence="1">DMATase</shortName>
    </alternativeName>
    <alternativeName>
        <fullName evidence="1">Isopentenyl-diphosphate:tRNA isopentenyltransferase</fullName>
        <shortName evidence="1">IPP transferase</shortName>
        <shortName evidence="1">IPPT</shortName>
        <shortName evidence="1">IPTase</shortName>
    </alternativeName>
</protein>
<accession>Q5LZH6</accession>
<name>MIAA_STRT1</name>